<organism>
    <name type="scientific">Rhizobium etli (strain CIAT 652)</name>
    <dbReference type="NCBI Taxonomy" id="491916"/>
    <lineage>
        <taxon>Bacteria</taxon>
        <taxon>Pseudomonadati</taxon>
        <taxon>Pseudomonadota</taxon>
        <taxon>Alphaproteobacteria</taxon>
        <taxon>Hyphomicrobiales</taxon>
        <taxon>Rhizobiaceae</taxon>
        <taxon>Rhizobium/Agrobacterium group</taxon>
        <taxon>Rhizobium</taxon>
    </lineage>
</organism>
<protein>
    <recommendedName>
        <fullName evidence="1">Anthranilate phosphoribosyltransferase</fullName>
        <ecNumber evidence="1">2.4.2.18</ecNumber>
    </recommendedName>
</protein>
<feature type="chain" id="PRO_1000099837" description="Anthranilate phosphoribosyltransferase">
    <location>
        <begin position="1"/>
        <end position="338"/>
    </location>
</feature>
<feature type="binding site" evidence="1">
    <location>
        <position position="81"/>
    </location>
    <ligand>
        <name>5-phospho-alpha-D-ribose 1-diphosphate</name>
        <dbReference type="ChEBI" id="CHEBI:58017"/>
    </ligand>
</feature>
<feature type="binding site" evidence="1">
    <location>
        <position position="81"/>
    </location>
    <ligand>
        <name>anthranilate</name>
        <dbReference type="ChEBI" id="CHEBI:16567"/>
        <label>1</label>
    </ligand>
</feature>
<feature type="binding site" evidence="1">
    <location>
        <begin position="84"/>
        <end position="85"/>
    </location>
    <ligand>
        <name>5-phospho-alpha-D-ribose 1-diphosphate</name>
        <dbReference type="ChEBI" id="CHEBI:58017"/>
    </ligand>
</feature>
<feature type="binding site" evidence="1">
    <location>
        <position position="89"/>
    </location>
    <ligand>
        <name>5-phospho-alpha-D-ribose 1-diphosphate</name>
        <dbReference type="ChEBI" id="CHEBI:58017"/>
    </ligand>
</feature>
<feature type="binding site" evidence="1">
    <location>
        <begin position="91"/>
        <end position="94"/>
    </location>
    <ligand>
        <name>5-phospho-alpha-D-ribose 1-diphosphate</name>
        <dbReference type="ChEBI" id="CHEBI:58017"/>
    </ligand>
</feature>
<feature type="binding site" evidence="1">
    <location>
        <position position="93"/>
    </location>
    <ligand>
        <name>Mg(2+)</name>
        <dbReference type="ChEBI" id="CHEBI:18420"/>
        <label>1</label>
    </ligand>
</feature>
<feature type="binding site" evidence="1">
    <location>
        <begin position="109"/>
        <end position="117"/>
    </location>
    <ligand>
        <name>5-phospho-alpha-D-ribose 1-diphosphate</name>
        <dbReference type="ChEBI" id="CHEBI:58017"/>
    </ligand>
</feature>
<feature type="binding site" evidence="1">
    <location>
        <position position="112"/>
    </location>
    <ligand>
        <name>anthranilate</name>
        <dbReference type="ChEBI" id="CHEBI:16567"/>
        <label>1</label>
    </ligand>
</feature>
<feature type="binding site" evidence="1">
    <location>
        <position position="121"/>
    </location>
    <ligand>
        <name>5-phospho-alpha-D-ribose 1-diphosphate</name>
        <dbReference type="ChEBI" id="CHEBI:58017"/>
    </ligand>
</feature>
<feature type="binding site" evidence="1">
    <location>
        <position position="167"/>
    </location>
    <ligand>
        <name>anthranilate</name>
        <dbReference type="ChEBI" id="CHEBI:16567"/>
        <label>2</label>
    </ligand>
</feature>
<feature type="binding site" evidence="1">
    <location>
        <position position="225"/>
    </location>
    <ligand>
        <name>Mg(2+)</name>
        <dbReference type="ChEBI" id="CHEBI:18420"/>
        <label>2</label>
    </ligand>
</feature>
<feature type="binding site" evidence="1">
    <location>
        <position position="226"/>
    </location>
    <ligand>
        <name>Mg(2+)</name>
        <dbReference type="ChEBI" id="CHEBI:18420"/>
        <label>1</label>
    </ligand>
</feature>
<feature type="binding site" evidence="1">
    <location>
        <position position="226"/>
    </location>
    <ligand>
        <name>Mg(2+)</name>
        <dbReference type="ChEBI" id="CHEBI:18420"/>
        <label>2</label>
    </ligand>
</feature>
<reference key="1">
    <citation type="journal article" date="2010" name="Appl. Environ. Microbiol.">
        <title>Conserved symbiotic plasmid DNA sequences in the multireplicon pangenomic structure of Rhizobium etli.</title>
        <authorList>
            <person name="Gonzalez V."/>
            <person name="Acosta J.L."/>
            <person name="Santamaria R.I."/>
            <person name="Bustos P."/>
            <person name="Fernandez J.L."/>
            <person name="Hernandez Gonzalez I.L."/>
            <person name="Diaz R."/>
            <person name="Flores M."/>
            <person name="Palacios R."/>
            <person name="Mora J."/>
            <person name="Davila G."/>
        </authorList>
    </citation>
    <scope>NUCLEOTIDE SEQUENCE [LARGE SCALE GENOMIC DNA]</scope>
    <source>
        <strain>CIAT 652</strain>
    </source>
</reference>
<accession>B3Q0L2</accession>
<name>TRPD_RHIE6</name>
<comment type="function">
    <text evidence="1">Catalyzes the transfer of the phosphoribosyl group of 5-phosphorylribose-1-pyrophosphate (PRPP) to anthranilate to yield N-(5'-phosphoribosyl)-anthranilate (PRA).</text>
</comment>
<comment type="catalytic activity">
    <reaction evidence="1">
        <text>N-(5-phospho-beta-D-ribosyl)anthranilate + diphosphate = 5-phospho-alpha-D-ribose 1-diphosphate + anthranilate</text>
        <dbReference type="Rhea" id="RHEA:11768"/>
        <dbReference type="ChEBI" id="CHEBI:16567"/>
        <dbReference type="ChEBI" id="CHEBI:18277"/>
        <dbReference type="ChEBI" id="CHEBI:33019"/>
        <dbReference type="ChEBI" id="CHEBI:58017"/>
        <dbReference type="EC" id="2.4.2.18"/>
    </reaction>
</comment>
<comment type="cofactor">
    <cofactor evidence="1">
        <name>Mg(2+)</name>
        <dbReference type="ChEBI" id="CHEBI:18420"/>
    </cofactor>
    <text evidence="1">Binds 2 magnesium ions per monomer.</text>
</comment>
<comment type="pathway">
    <text evidence="1">Amino-acid biosynthesis; L-tryptophan biosynthesis; L-tryptophan from chorismate: step 2/5.</text>
</comment>
<comment type="subunit">
    <text evidence="1">Homodimer.</text>
</comment>
<comment type="similarity">
    <text evidence="1">Belongs to the anthranilate phosphoribosyltransferase family.</text>
</comment>
<proteinExistence type="inferred from homology"/>
<dbReference type="EC" id="2.4.2.18" evidence="1"/>
<dbReference type="EMBL" id="CP001074">
    <property type="protein sequence ID" value="ACE91216.1"/>
    <property type="molecule type" value="Genomic_DNA"/>
</dbReference>
<dbReference type="SMR" id="B3Q0L2"/>
<dbReference type="KEGG" id="rec:RHECIAT_CH0002261"/>
<dbReference type="eggNOG" id="COG0547">
    <property type="taxonomic scope" value="Bacteria"/>
</dbReference>
<dbReference type="HOGENOM" id="CLU_034315_2_1_5"/>
<dbReference type="UniPathway" id="UPA00035">
    <property type="reaction ID" value="UER00041"/>
</dbReference>
<dbReference type="Proteomes" id="UP000008817">
    <property type="component" value="Chromosome"/>
</dbReference>
<dbReference type="GO" id="GO:0005829">
    <property type="term" value="C:cytosol"/>
    <property type="evidence" value="ECO:0007669"/>
    <property type="project" value="TreeGrafter"/>
</dbReference>
<dbReference type="GO" id="GO:0004048">
    <property type="term" value="F:anthranilate phosphoribosyltransferase activity"/>
    <property type="evidence" value="ECO:0007669"/>
    <property type="project" value="UniProtKB-UniRule"/>
</dbReference>
<dbReference type="GO" id="GO:0000287">
    <property type="term" value="F:magnesium ion binding"/>
    <property type="evidence" value="ECO:0007669"/>
    <property type="project" value="UniProtKB-UniRule"/>
</dbReference>
<dbReference type="GO" id="GO:0000162">
    <property type="term" value="P:L-tryptophan biosynthetic process"/>
    <property type="evidence" value="ECO:0007669"/>
    <property type="project" value="UniProtKB-UniRule"/>
</dbReference>
<dbReference type="FunFam" id="3.40.1030.10:FF:000002">
    <property type="entry name" value="Anthranilate phosphoribosyltransferase"/>
    <property type="match status" value="1"/>
</dbReference>
<dbReference type="Gene3D" id="3.40.1030.10">
    <property type="entry name" value="Nucleoside phosphorylase/phosphoribosyltransferase catalytic domain"/>
    <property type="match status" value="1"/>
</dbReference>
<dbReference type="Gene3D" id="1.20.970.10">
    <property type="entry name" value="Transferase, Pyrimidine Nucleoside Phosphorylase, Chain C"/>
    <property type="match status" value="1"/>
</dbReference>
<dbReference type="HAMAP" id="MF_00211">
    <property type="entry name" value="TrpD"/>
    <property type="match status" value="1"/>
</dbReference>
<dbReference type="InterPro" id="IPR005940">
    <property type="entry name" value="Anthranilate_Pribosyl_Tfrase"/>
</dbReference>
<dbReference type="InterPro" id="IPR000312">
    <property type="entry name" value="Glycosyl_Trfase_fam3"/>
</dbReference>
<dbReference type="InterPro" id="IPR017459">
    <property type="entry name" value="Glycosyl_Trfase_fam3_N_dom"/>
</dbReference>
<dbReference type="InterPro" id="IPR036320">
    <property type="entry name" value="Glycosyl_Trfase_fam3_N_dom_sf"/>
</dbReference>
<dbReference type="InterPro" id="IPR035902">
    <property type="entry name" value="Nuc_phospho_transferase"/>
</dbReference>
<dbReference type="NCBIfam" id="TIGR01245">
    <property type="entry name" value="trpD"/>
    <property type="match status" value="1"/>
</dbReference>
<dbReference type="PANTHER" id="PTHR43285">
    <property type="entry name" value="ANTHRANILATE PHOSPHORIBOSYLTRANSFERASE"/>
    <property type="match status" value="1"/>
</dbReference>
<dbReference type="PANTHER" id="PTHR43285:SF2">
    <property type="entry name" value="ANTHRANILATE PHOSPHORIBOSYLTRANSFERASE"/>
    <property type="match status" value="1"/>
</dbReference>
<dbReference type="Pfam" id="PF02885">
    <property type="entry name" value="Glycos_trans_3N"/>
    <property type="match status" value="1"/>
</dbReference>
<dbReference type="Pfam" id="PF00591">
    <property type="entry name" value="Glycos_transf_3"/>
    <property type="match status" value="1"/>
</dbReference>
<dbReference type="SUPFAM" id="SSF52418">
    <property type="entry name" value="Nucleoside phosphorylase/phosphoribosyltransferase catalytic domain"/>
    <property type="match status" value="1"/>
</dbReference>
<dbReference type="SUPFAM" id="SSF47648">
    <property type="entry name" value="Nucleoside phosphorylase/phosphoribosyltransferase N-terminal domain"/>
    <property type="match status" value="1"/>
</dbReference>
<keyword id="KW-0028">Amino-acid biosynthesis</keyword>
<keyword id="KW-0057">Aromatic amino acid biosynthesis</keyword>
<keyword id="KW-0328">Glycosyltransferase</keyword>
<keyword id="KW-0460">Magnesium</keyword>
<keyword id="KW-0479">Metal-binding</keyword>
<keyword id="KW-0808">Transferase</keyword>
<keyword id="KW-0822">Tryptophan biosynthesis</keyword>
<sequence length="338" mass="34907">MTDLKPFLAKAASREPLTRDEARAAFDILMSGQATPSQIGGFLMALRVRGESVDEIVGAVTTMRSKMLTVEAPADAIDIVGTGGDASGTYNISTLAALIVAGAGVPVAKHGNRALSSKSGAADNLSALGVNIDVGPEIISRCIAEASVGFMFAQLHHSAMRHVGPSRVELGTRTIFNLLGPLSNPAGVRRQLLGVFSPQWLVPLAEVMRDLGSECVWVVHGDGLDEITTTGITKVAALEDGKIRTFELSPADFGVSPCVLADIKGGDGVANAAALREVLGGAKNAYRDVSLANAAASLVISGKVETIRDGMKLAAHSLDSGATALALDKLIAVSNDID</sequence>
<gene>
    <name evidence="1" type="primary">trpD</name>
    <name type="ordered locus">RHECIAT_CH0002261</name>
</gene>
<evidence type="ECO:0000255" key="1">
    <source>
        <dbReference type="HAMAP-Rule" id="MF_00211"/>
    </source>
</evidence>